<gene>
    <name evidence="1" type="primary">mscL</name>
    <name type="ordered locus">Sputcn32_3339</name>
</gene>
<comment type="function">
    <text evidence="1">Channel that opens in response to stretch forces in the membrane lipid bilayer. May participate in the regulation of osmotic pressure changes within the cell.</text>
</comment>
<comment type="subunit">
    <text evidence="1">Homopentamer.</text>
</comment>
<comment type="subcellular location">
    <subcellularLocation>
        <location evidence="1">Cell inner membrane</location>
        <topology evidence="1">Multi-pass membrane protein</topology>
    </subcellularLocation>
</comment>
<comment type="similarity">
    <text evidence="1">Belongs to the MscL family.</text>
</comment>
<name>MSCL_SHEPC</name>
<dbReference type="EMBL" id="CP000681">
    <property type="protein sequence ID" value="ABP77051.1"/>
    <property type="molecule type" value="Genomic_DNA"/>
</dbReference>
<dbReference type="SMR" id="A4YAR8"/>
<dbReference type="STRING" id="319224.Sputcn32_3339"/>
<dbReference type="KEGG" id="spc:Sputcn32_3339"/>
<dbReference type="eggNOG" id="COG1970">
    <property type="taxonomic scope" value="Bacteria"/>
</dbReference>
<dbReference type="HOGENOM" id="CLU_095787_0_0_6"/>
<dbReference type="GO" id="GO:0005886">
    <property type="term" value="C:plasma membrane"/>
    <property type="evidence" value="ECO:0007669"/>
    <property type="project" value="UniProtKB-SubCell"/>
</dbReference>
<dbReference type="GO" id="GO:0008381">
    <property type="term" value="F:mechanosensitive monoatomic ion channel activity"/>
    <property type="evidence" value="ECO:0007669"/>
    <property type="project" value="UniProtKB-UniRule"/>
</dbReference>
<dbReference type="FunFam" id="1.10.1200.120:FF:000001">
    <property type="entry name" value="Large-conductance mechanosensitive channel"/>
    <property type="match status" value="1"/>
</dbReference>
<dbReference type="Gene3D" id="1.10.1200.120">
    <property type="entry name" value="Large-conductance mechanosensitive channel, MscL, domain 1"/>
    <property type="match status" value="1"/>
</dbReference>
<dbReference type="HAMAP" id="MF_00115">
    <property type="entry name" value="MscL"/>
    <property type="match status" value="1"/>
</dbReference>
<dbReference type="InterPro" id="IPR019823">
    <property type="entry name" value="Mechanosensitive_channel_CS"/>
</dbReference>
<dbReference type="InterPro" id="IPR001185">
    <property type="entry name" value="MS_channel"/>
</dbReference>
<dbReference type="InterPro" id="IPR037673">
    <property type="entry name" value="MSC/AndL"/>
</dbReference>
<dbReference type="InterPro" id="IPR036019">
    <property type="entry name" value="MscL_channel"/>
</dbReference>
<dbReference type="NCBIfam" id="TIGR00220">
    <property type="entry name" value="mscL"/>
    <property type="match status" value="1"/>
</dbReference>
<dbReference type="NCBIfam" id="NF001843">
    <property type="entry name" value="PRK00567.1-4"/>
    <property type="match status" value="1"/>
</dbReference>
<dbReference type="PANTHER" id="PTHR30266:SF2">
    <property type="entry name" value="LARGE-CONDUCTANCE MECHANOSENSITIVE CHANNEL"/>
    <property type="match status" value="1"/>
</dbReference>
<dbReference type="PANTHER" id="PTHR30266">
    <property type="entry name" value="MECHANOSENSITIVE CHANNEL MSCL"/>
    <property type="match status" value="1"/>
</dbReference>
<dbReference type="Pfam" id="PF01741">
    <property type="entry name" value="MscL"/>
    <property type="match status" value="1"/>
</dbReference>
<dbReference type="PRINTS" id="PR01264">
    <property type="entry name" value="MECHCHANNEL"/>
</dbReference>
<dbReference type="SUPFAM" id="SSF81330">
    <property type="entry name" value="Gated mechanosensitive channel"/>
    <property type="match status" value="1"/>
</dbReference>
<dbReference type="PROSITE" id="PS01327">
    <property type="entry name" value="MSCL"/>
    <property type="match status" value="1"/>
</dbReference>
<protein>
    <recommendedName>
        <fullName evidence="1">Large-conductance mechanosensitive channel</fullName>
    </recommendedName>
</protein>
<proteinExistence type="inferred from homology"/>
<accession>A4YAR8</accession>
<organism>
    <name type="scientific">Shewanella putrefaciens (strain CN-32 / ATCC BAA-453)</name>
    <dbReference type="NCBI Taxonomy" id="319224"/>
    <lineage>
        <taxon>Bacteria</taxon>
        <taxon>Pseudomonadati</taxon>
        <taxon>Pseudomonadota</taxon>
        <taxon>Gammaproteobacteria</taxon>
        <taxon>Alteromonadales</taxon>
        <taxon>Shewanellaceae</taxon>
        <taxon>Shewanella</taxon>
    </lineage>
</organism>
<evidence type="ECO:0000255" key="1">
    <source>
        <dbReference type="HAMAP-Rule" id="MF_00115"/>
    </source>
</evidence>
<feature type="chain" id="PRO_1000015425" description="Large-conductance mechanosensitive channel">
    <location>
        <begin position="1"/>
        <end position="136"/>
    </location>
</feature>
<feature type="transmembrane region" description="Helical" evidence="1">
    <location>
        <begin position="9"/>
        <end position="29"/>
    </location>
</feature>
<feature type="transmembrane region" description="Helical" evidence="1">
    <location>
        <begin position="79"/>
        <end position="99"/>
    </location>
</feature>
<keyword id="KW-0997">Cell inner membrane</keyword>
<keyword id="KW-1003">Cell membrane</keyword>
<keyword id="KW-0407">Ion channel</keyword>
<keyword id="KW-0406">Ion transport</keyword>
<keyword id="KW-0472">Membrane</keyword>
<keyword id="KW-0812">Transmembrane</keyword>
<keyword id="KW-1133">Transmembrane helix</keyword>
<keyword id="KW-0813">Transport</keyword>
<reference key="1">
    <citation type="submission" date="2007-04" db="EMBL/GenBank/DDBJ databases">
        <title>Complete sequence of Shewanella putrefaciens CN-32.</title>
        <authorList>
            <consortium name="US DOE Joint Genome Institute"/>
            <person name="Copeland A."/>
            <person name="Lucas S."/>
            <person name="Lapidus A."/>
            <person name="Barry K."/>
            <person name="Detter J.C."/>
            <person name="Glavina del Rio T."/>
            <person name="Hammon N."/>
            <person name="Israni S."/>
            <person name="Dalin E."/>
            <person name="Tice H."/>
            <person name="Pitluck S."/>
            <person name="Chain P."/>
            <person name="Malfatti S."/>
            <person name="Shin M."/>
            <person name="Vergez L."/>
            <person name="Schmutz J."/>
            <person name="Larimer F."/>
            <person name="Land M."/>
            <person name="Hauser L."/>
            <person name="Kyrpides N."/>
            <person name="Mikhailova N."/>
            <person name="Romine M.F."/>
            <person name="Fredrickson J."/>
            <person name="Tiedje J."/>
            <person name="Richardson P."/>
        </authorList>
    </citation>
    <scope>NUCLEOTIDE SEQUENCE [LARGE SCALE GENOMIC DNA]</scope>
    <source>
        <strain>CN-32 / ATCC BAA-453</strain>
    </source>
</reference>
<sequence length="136" mass="14577">MSLIKEFKAFASRGNVIDMAVGIIIGAAFGKIVSSFVADVIMPPIGIILGGVNFSDLSIVLQAAQGDAPSVVIAYGKFIQTVIDFTIIAFAIFMGLKAINTLKRKEEEAPKAPPAPTKEEELLSEIRDLLKAQQEK</sequence>